<protein>
    <recommendedName>
        <fullName evidence="2">tRNA (guanine-N(7)-)-methyltransferase</fullName>
        <ecNumber evidence="2">2.1.1.33</ecNumber>
    </recommendedName>
    <alternativeName>
        <fullName evidence="2">tRNA (guanine(46)-N(7))-methyltransferase</fullName>
    </alternativeName>
    <alternativeName>
        <fullName evidence="2">tRNA(m7G46)-methyltransferase</fullName>
    </alternativeName>
</protein>
<proteinExistence type="inferred from homology"/>
<keyword id="KW-0489">Methyltransferase</keyword>
<keyword id="KW-0949">S-adenosyl-L-methionine</keyword>
<keyword id="KW-0808">Transferase</keyword>
<keyword id="KW-0819">tRNA processing</keyword>
<organism>
    <name type="scientific">Streptococcus equi subsp. zooepidemicus (strain MGCS10565)</name>
    <dbReference type="NCBI Taxonomy" id="552526"/>
    <lineage>
        <taxon>Bacteria</taxon>
        <taxon>Bacillati</taxon>
        <taxon>Bacillota</taxon>
        <taxon>Bacilli</taxon>
        <taxon>Lactobacillales</taxon>
        <taxon>Streptococcaceae</taxon>
        <taxon>Streptococcus</taxon>
    </lineage>
</organism>
<dbReference type="EC" id="2.1.1.33" evidence="2"/>
<dbReference type="EMBL" id="CP001129">
    <property type="protein sequence ID" value="ACG61809.1"/>
    <property type="molecule type" value="Genomic_DNA"/>
</dbReference>
<dbReference type="RefSeq" id="WP_012515085.1">
    <property type="nucleotide sequence ID" value="NC_011134.1"/>
</dbReference>
<dbReference type="SMR" id="B4U1E2"/>
<dbReference type="KEGG" id="sez:Sez_0437"/>
<dbReference type="HOGENOM" id="CLU_050910_2_1_9"/>
<dbReference type="UniPathway" id="UPA00989"/>
<dbReference type="Proteomes" id="UP000001873">
    <property type="component" value="Chromosome"/>
</dbReference>
<dbReference type="GO" id="GO:0043527">
    <property type="term" value="C:tRNA methyltransferase complex"/>
    <property type="evidence" value="ECO:0007669"/>
    <property type="project" value="TreeGrafter"/>
</dbReference>
<dbReference type="GO" id="GO:0008176">
    <property type="term" value="F:tRNA (guanine(46)-N7)-methyltransferase activity"/>
    <property type="evidence" value="ECO:0007669"/>
    <property type="project" value="UniProtKB-UniRule"/>
</dbReference>
<dbReference type="CDD" id="cd02440">
    <property type="entry name" value="AdoMet_MTases"/>
    <property type="match status" value="1"/>
</dbReference>
<dbReference type="FunFam" id="3.40.50.150:FF:000035">
    <property type="entry name" value="tRNA (guanine-N(7)-)-methyltransferase"/>
    <property type="match status" value="1"/>
</dbReference>
<dbReference type="Gene3D" id="3.40.50.150">
    <property type="entry name" value="Vaccinia Virus protein VP39"/>
    <property type="match status" value="1"/>
</dbReference>
<dbReference type="HAMAP" id="MF_01057">
    <property type="entry name" value="tRNA_methyltr_TrmB"/>
    <property type="match status" value="1"/>
</dbReference>
<dbReference type="InterPro" id="IPR029063">
    <property type="entry name" value="SAM-dependent_MTases_sf"/>
</dbReference>
<dbReference type="InterPro" id="IPR003358">
    <property type="entry name" value="tRNA_(Gua-N-7)_MeTrfase_Trmb"/>
</dbReference>
<dbReference type="InterPro" id="IPR055361">
    <property type="entry name" value="tRNA_methyltr_TrmB_bact"/>
</dbReference>
<dbReference type="NCBIfam" id="NF001080">
    <property type="entry name" value="PRK00121.2-2"/>
    <property type="match status" value="1"/>
</dbReference>
<dbReference type="NCBIfam" id="TIGR00091">
    <property type="entry name" value="tRNA (guanosine(46)-N7)-methyltransferase TrmB"/>
    <property type="match status" value="1"/>
</dbReference>
<dbReference type="PANTHER" id="PTHR23417">
    <property type="entry name" value="3-DEOXY-D-MANNO-OCTULOSONIC-ACID TRANSFERASE/TRNA GUANINE-N 7 - -METHYLTRANSFERASE"/>
    <property type="match status" value="1"/>
</dbReference>
<dbReference type="PANTHER" id="PTHR23417:SF14">
    <property type="entry name" value="PENTACOTRIPEPTIDE-REPEAT REGION OF PRORP DOMAIN-CONTAINING PROTEIN"/>
    <property type="match status" value="1"/>
</dbReference>
<dbReference type="Pfam" id="PF02390">
    <property type="entry name" value="Methyltransf_4"/>
    <property type="match status" value="1"/>
</dbReference>
<dbReference type="SUPFAM" id="SSF53335">
    <property type="entry name" value="S-adenosyl-L-methionine-dependent methyltransferases"/>
    <property type="match status" value="1"/>
</dbReference>
<dbReference type="PROSITE" id="PS51625">
    <property type="entry name" value="SAM_MT_TRMB"/>
    <property type="match status" value="1"/>
</dbReference>
<sequence>MRVRKRKGAQEYLENNPHYVILEPEAAKGRWCEVFGNDHPIHIEVGSGKGAFITGMALKNPEINYIGIDIQLSVLSYALDKVLASQAPNIRLLRVDGSSLTNYFDAGEIDMMYLNFSDPWPKSRHEKRRLTYKSFLDTYKQILPENGEIHFKTDNRGLFEYSLASFSQYGMTLKQVWLDLHASDYPDNVMTEYEARFAKKGQVIYRLEATF</sequence>
<gene>
    <name evidence="2" type="primary">trmB</name>
    <name type="ordered locus">Sez_0437</name>
</gene>
<reference key="1">
    <citation type="journal article" date="2008" name="PLoS ONE">
        <title>Genome sequence of a lancefield group C Streptococcus zooepidemicus strain causing epidemic nephritis: new information about an old disease.</title>
        <authorList>
            <person name="Beres S.B."/>
            <person name="Sesso R."/>
            <person name="Pinto S.W.L."/>
            <person name="Hoe N.P."/>
            <person name="Porcella S.F."/>
            <person name="Deleo F.R."/>
            <person name="Musser J.M."/>
        </authorList>
    </citation>
    <scope>NUCLEOTIDE SEQUENCE [LARGE SCALE GENOMIC DNA]</scope>
    <source>
        <strain>MGCS10565</strain>
    </source>
</reference>
<feature type="chain" id="PRO_1000136366" description="tRNA (guanine-N(7)-)-methyltransferase">
    <location>
        <begin position="1"/>
        <end position="211"/>
    </location>
</feature>
<feature type="region of interest" description="Interaction with RNA" evidence="2">
    <location>
        <begin position="124"/>
        <end position="129"/>
    </location>
</feature>
<feature type="active site" evidence="1">
    <location>
        <position position="118"/>
    </location>
</feature>
<feature type="binding site" evidence="2">
    <location>
        <position position="44"/>
    </location>
    <ligand>
        <name>S-adenosyl-L-methionine</name>
        <dbReference type="ChEBI" id="CHEBI:59789"/>
    </ligand>
</feature>
<feature type="binding site" evidence="2">
    <location>
        <position position="69"/>
    </location>
    <ligand>
        <name>S-adenosyl-L-methionine</name>
        <dbReference type="ChEBI" id="CHEBI:59789"/>
    </ligand>
</feature>
<feature type="binding site" evidence="2">
    <location>
        <position position="96"/>
    </location>
    <ligand>
        <name>S-adenosyl-L-methionine</name>
        <dbReference type="ChEBI" id="CHEBI:59789"/>
    </ligand>
</feature>
<feature type="binding site" evidence="2">
    <location>
        <position position="118"/>
    </location>
    <ligand>
        <name>S-adenosyl-L-methionine</name>
        <dbReference type="ChEBI" id="CHEBI:59789"/>
    </ligand>
</feature>
<feature type="binding site" evidence="2">
    <location>
        <position position="122"/>
    </location>
    <ligand>
        <name>substrate</name>
    </ligand>
</feature>
<feature type="binding site" evidence="2">
    <location>
        <position position="154"/>
    </location>
    <ligand>
        <name>substrate</name>
    </ligand>
</feature>
<feature type="binding site" evidence="2">
    <location>
        <begin position="191"/>
        <end position="194"/>
    </location>
    <ligand>
        <name>substrate</name>
    </ligand>
</feature>
<comment type="function">
    <text evidence="2">Catalyzes the formation of N(7)-methylguanine at position 46 (m7G46) in tRNA.</text>
</comment>
<comment type="catalytic activity">
    <reaction evidence="2">
        <text>guanosine(46) in tRNA + S-adenosyl-L-methionine = N(7)-methylguanosine(46) in tRNA + S-adenosyl-L-homocysteine</text>
        <dbReference type="Rhea" id="RHEA:42708"/>
        <dbReference type="Rhea" id="RHEA-COMP:10188"/>
        <dbReference type="Rhea" id="RHEA-COMP:10189"/>
        <dbReference type="ChEBI" id="CHEBI:57856"/>
        <dbReference type="ChEBI" id="CHEBI:59789"/>
        <dbReference type="ChEBI" id="CHEBI:74269"/>
        <dbReference type="ChEBI" id="CHEBI:74480"/>
        <dbReference type="EC" id="2.1.1.33"/>
    </reaction>
</comment>
<comment type="pathway">
    <text evidence="2">tRNA modification; N(7)-methylguanine-tRNA biosynthesis.</text>
</comment>
<comment type="similarity">
    <text evidence="2">Belongs to the class I-like SAM-binding methyltransferase superfamily. TrmB family.</text>
</comment>
<accession>B4U1E2</accession>
<name>TRMB_STREM</name>
<evidence type="ECO:0000250" key="1"/>
<evidence type="ECO:0000255" key="2">
    <source>
        <dbReference type="HAMAP-Rule" id="MF_01057"/>
    </source>
</evidence>